<comment type="function">
    <text evidence="2">Displays esterase activity towards short chain fatty esters (acyl chain length of up to 8 carbons). Able to hydrolyze triacetylglycerol (triacetin) and tributyrylglycerol (tributyrin), but not trioleylglycerol (triolein) or cholesterol oleate. Negatively regulates MalT activity by antagonizing maltotriose binding. Inhibits MelA galactosidase activity.</text>
</comment>
<comment type="subunit">
    <text evidence="2">Homodimer. Interacts with MalT and MelA.</text>
</comment>
<comment type="subcellular location">
    <subcellularLocation>
        <location evidence="2">Cytoplasm</location>
    </subcellularLocation>
</comment>
<comment type="similarity">
    <text evidence="2">Belongs to the 'GDXG' lipolytic enzyme family.</text>
</comment>
<evidence type="ECO:0000250" key="1">
    <source>
        <dbReference type="UniProtKB" id="Q5NUF3"/>
    </source>
</evidence>
<evidence type="ECO:0000255" key="2">
    <source>
        <dbReference type="HAMAP-Rule" id="MF_01958"/>
    </source>
</evidence>
<organism>
    <name type="scientific">Salmonella paratyphi B (strain ATCC BAA-1250 / SPB7)</name>
    <dbReference type="NCBI Taxonomy" id="1016998"/>
    <lineage>
        <taxon>Bacteria</taxon>
        <taxon>Pseudomonadati</taxon>
        <taxon>Pseudomonadota</taxon>
        <taxon>Gammaproteobacteria</taxon>
        <taxon>Enterobacterales</taxon>
        <taxon>Enterobacteriaceae</taxon>
        <taxon>Salmonella</taxon>
    </lineage>
</organism>
<sequence>MKPENKIPVLTRLSDEMTAVVNFQQPGLPPWPADGDIETQRQYYLLERRFWNADAPSMTTRTCVVPTPYGDVTTRLYSPQPTSQATLYYLHGGGFILGNLDTHDRIMRLLARYTGCTVIGIDYSLSPQARYPQAIEETVAVCSYFSQHADEYSLNVEKIGFAGDSAGAMLALASALWLRDKHIRCGNVIAILLWYGLYGLQDSVSRRLFGGAWDGLTREDLDMYEKAYLRNEDDRESPWYCLFNNDLTRDVPPCFIASAEFDPLIDDSRLLHQTLQAHQQPCEYKMYPGTLHAFLHYSRMMTIADDALQDGARFFMARMKTPR</sequence>
<gene>
    <name evidence="2" type="primary">aes</name>
    <name type="ordered locus">SPAB_03078</name>
</gene>
<proteinExistence type="inferred from homology"/>
<protein>
    <recommendedName>
        <fullName evidence="2">Acetyl esterase</fullName>
        <ecNumber evidence="2">3.1.1.-</ecNumber>
    </recommendedName>
</protein>
<feature type="chain" id="PRO_1000088518" description="Acetyl esterase">
    <location>
        <begin position="1"/>
        <end position="323"/>
    </location>
</feature>
<feature type="short sequence motif" description="Involved in the stabilization of the negatively charged intermediate by the formation of the oxyanion hole" evidence="1">
    <location>
        <begin position="91"/>
        <end position="93"/>
    </location>
</feature>
<feature type="active site" evidence="2">
    <location>
        <position position="165"/>
    </location>
</feature>
<feature type="active site" evidence="2">
    <location>
        <position position="262"/>
    </location>
</feature>
<feature type="active site" evidence="2">
    <location>
        <position position="292"/>
    </location>
</feature>
<name>AES_SALPB</name>
<reference key="1">
    <citation type="submission" date="2007-11" db="EMBL/GenBank/DDBJ databases">
        <authorList>
            <consortium name="The Salmonella enterica serovar Paratyphi B Genome Sequencing Project"/>
            <person name="McClelland M."/>
            <person name="Sanderson E.K."/>
            <person name="Porwollik S."/>
            <person name="Spieth J."/>
            <person name="Clifton W.S."/>
            <person name="Fulton R."/>
            <person name="Cordes M."/>
            <person name="Wollam A."/>
            <person name="Shah N."/>
            <person name="Pepin K."/>
            <person name="Bhonagiri V."/>
            <person name="Nash W."/>
            <person name="Johnson M."/>
            <person name="Thiruvilangam P."/>
            <person name="Wilson R."/>
        </authorList>
    </citation>
    <scope>NUCLEOTIDE SEQUENCE [LARGE SCALE GENOMIC DNA]</scope>
    <source>
        <strain>ATCC BAA-1250 / SPB7</strain>
    </source>
</reference>
<dbReference type="EC" id="3.1.1.-" evidence="2"/>
<dbReference type="EMBL" id="CP000886">
    <property type="protein sequence ID" value="ABX68440.1"/>
    <property type="molecule type" value="Genomic_DNA"/>
</dbReference>
<dbReference type="RefSeq" id="WP_000801790.1">
    <property type="nucleotide sequence ID" value="NC_010102.1"/>
</dbReference>
<dbReference type="SMR" id="A9MW81"/>
<dbReference type="ESTHER" id="salty-AES">
    <property type="family name" value="Acetyl_esterase"/>
</dbReference>
<dbReference type="MEROPS" id="S09.A47"/>
<dbReference type="KEGG" id="spq:SPAB_03078"/>
<dbReference type="PATRIC" id="fig|1016998.12.peg.2905"/>
<dbReference type="HOGENOM" id="CLU_012494_6_4_6"/>
<dbReference type="BioCyc" id="SENT1016998:SPAB_RS12570-MONOMER"/>
<dbReference type="Proteomes" id="UP000008556">
    <property type="component" value="Chromosome"/>
</dbReference>
<dbReference type="GO" id="GO:0005737">
    <property type="term" value="C:cytoplasm"/>
    <property type="evidence" value="ECO:0007669"/>
    <property type="project" value="UniProtKB-SubCell"/>
</dbReference>
<dbReference type="GO" id="GO:0052689">
    <property type="term" value="F:carboxylic ester hydrolase activity"/>
    <property type="evidence" value="ECO:0007669"/>
    <property type="project" value="UniProtKB-UniRule"/>
</dbReference>
<dbReference type="FunFam" id="3.40.50.1820:FF:000035">
    <property type="entry name" value="Acetyl esterase"/>
    <property type="match status" value="1"/>
</dbReference>
<dbReference type="Gene3D" id="3.40.50.1820">
    <property type="entry name" value="alpha/beta hydrolase"/>
    <property type="match status" value="1"/>
</dbReference>
<dbReference type="HAMAP" id="MF_01958">
    <property type="entry name" value="Acetyl_esterase"/>
    <property type="match status" value="1"/>
</dbReference>
<dbReference type="InterPro" id="IPR013094">
    <property type="entry name" value="AB_hydrolase_3"/>
</dbReference>
<dbReference type="InterPro" id="IPR029058">
    <property type="entry name" value="AB_hydrolase_fold"/>
</dbReference>
<dbReference type="InterPro" id="IPR023508">
    <property type="entry name" value="Acetyl_esterase"/>
</dbReference>
<dbReference type="InterPro" id="IPR050300">
    <property type="entry name" value="GDXG_lipolytic_enzyme"/>
</dbReference>
<dbReference type="InterPro" id="IPR033140">
    <property type="entry name" value="Lipase_GDXG_put_SER_AS"/>
</dbReference>
<dbReference type="NCBIfam" id="NF007547">
    <property type="entry name" value="PRK10162.1"/>
    <property type="match status" value="1"/>
</dbReference>
<dbReference type="PANTHER" id="PTHR48081">
    <property type="entry name" value="AB HYDROLASE SUPERFAMILY PROTEIN C4A8.06C"/>
    <property type="match status" value="1"/>
</dbReference>
<dbReference type="PANTHER" id="PTHR48081:SF8">
    <property type="entry name" value="ALPHA_BETA HYDROLASE FOLD-3 DOMAIN-CONTAINING PROTEIN-RELATED"/>
    <property type="match status" value="1"/>
</dbReference>
<dbReference type="Pfam" id="PF07859">
    <property type="entry name" value="Abhydrolase_3"/>
    <property type="match status" value="1"/>
</dbReference>
<dbReference type="SUPFAM" id="SSF53474">
    <property type="entry name" value="alpha/beta-Hydrolases"/>
    <property type="match status" value="1"/>
</dbReference>
<dbReference type="PROSITE" id="PS01174">
    <property type="entry name" value="LIPASE_GDXG_SER"/>
    <property type="match status" value="1"/>
</dbReference>
<keyword id="KW-0963">Cytoplasm</keyword>
<keyword id="KW-0378">Hydrolase</keyword>
<keyword id="KW-0719">Serine esterase</keyword>
<accession>A9MW81</accession>